<feature type="chain" id="PRO_0000069799" description="Melanocyte-stimulating hormone receptor">
    <location>
        <begin position="1"/>
        <end position="317"/>
    </location>
</feature>
<feature type="topological domain" description="Extracellular" evidence="2">
    <location>
        <begin position="1"/>
        <end position="37"/>
    </location>
</feature>
<feature type="transmembrane region" description="Helical; Name=1" evidence="2">
    <location>
        <begin position="38"/>
        <end position="63"/>
    </location>
</feature>
<feature type="topological domain" description="Cytoplasmic" evidence="2">
    <location>
        <begin position="64"/>
        <end position="72"/>
    </location>
</feature>
<feature type="transmembrane region" description="Helical; Name=2" evidence="2">
    <location>
        <begin position="73"/>
        <end position="93"/>
    </location>
</feature>
<feature type="topological domain" description="Extracellular" evidence="2">
    <location>
        <begin position="94"/>
        <end position="118"/>
    </location>
</feature>
<feature type="transmembrane region" description="Helical; Name=3" evidence="2">
    <location>
        <begin position="119"/>
        <end position="140"/>
    </location>
</feature>
<feature type="topological domain" description="Cytoplasmic" evidence="2">
    <location>
        <begin position="141"/>
        <end position="163"/>
    </location>
</feature>
<feature type="transmembrane region" description="Helical; Name=4" evidence="2">
    <location>
        <begin position="164"/>
        <end position="183"/>
    </location>
</feature>
<feature type="topological domain" description="Extracellular" evidence="2">
    <location>
        <begin position="184"/>
        <end position="191"/>
    </location>
</feature>
<feature type="transmembrane region" description="Helical; Name=5" evidence="2">
    <location>
        <begin position="192"/>
        <end position="211"/>
    </location>
</feature>
<feature type="topological domain" description="Cytoplasmic" evidence="2">
    <location>
        <begin position="212"/>
        <end position="240"/>
    </location>
</feature>
<feature type="transmembrane region" description="Helical; Name=6" evidence="2">
    <location>
        <begin position="241"/>
        <end position="266"/>
    </location>
</feature>
<feature type="topological domain" description="Extracellular" evidence="2">
    <location>
        <begin position="267"/>
        <end position="279"/>
    </location>
</feature>
<feature type="transmembrane region" description="Helical; Name=7" evidence="2">
    <location>
        <begin position="280"/>
        <end position="300"/>
    </location>
</feature>
<feature type="topological domain" description="Cytoplasmic" evidence="2">
    <location>
        <begin position="301"/>
        <end position="317"/>
    </location>
</feature>
<feature type="lipid moiety-binding region" description="S-palmitoyl cysteine" evidence="2">
    <location>
        <position position="315"/>
    </location>
</feature>
<feature type="glycosylation site" description="N-linked (GlcNAc...) asparagine" evidence="2">
    <location>
        <position position="29"/>
    </location>
</feature>
<evidence type="ECO:0000250" key="1">
    <source>
        <dbReference type="UniProtKB" id="Q01726"/>
    </source>
</evidence>
<evidence type="ECO:0000255" key="2"/>
<evidence type="ECO:0000255" key="3">
    <source>
        <dbReference type="PROSITE-ProRule" id="PRU00521"/>
    </source>
</evidence>
<name>MSHR_CAPCA</name>
<protein>
    <recommendedName>
        <fullName>Melanocyte-stimulating hormone receptor</fullName>
        <shortName>MSH-R</shortName>
    </recommendedName>
    <alternativeName>
        <fullName>Melanocortin receptor 1</fullName>
        <shortName>MC1-R</shortName>
    </alternativeName>
</protein>
<gene>
    <name type="primary">MC1R</name>
    <name type="synonym">MSHR</name>
</gene>
<comment type="function">
    <text evidence="1">Receptor for MSH (alpha, beta and gamma) and ACTH. The activity of this receptor is mediated by G proteins which activate adenylate cyclase. Mediates melanogenesis, the production of eumelanin (black/brown) and phaeomelanin (red/yellow), via regulation of cAMP signaling in melanocytes.</text>
</comment>
<comment type="subunit">
    <text evidence="1">Interacts with MGRN1, but does not undergo MGRN1-mediated ubiquitination; this interaction competes with GNAS-binding and thus inhibits agonist-induced cAMP production. Interacts with OPN3; the interaction results in a decrease in MC1R-mediated cAMP signaling and ultimately a decrease in melanin production in melanocytes.</text>
</comment>
<comment type="subcellular location">
    <subcellularLocation>
        <location evidence="1">Cell membrane</location>
        <topology evidence="2">Multi-pass membrane protein</topology>
    </subcellularLocation>
</comment>
<comment type="similarity">
    <text evidence="3">Belongs to the G-protein coupled receptor 1 family.</text>
</comment>
<organism>
    <name type="scientific">Capreolus capreolus</name>
    <name type="common">European roe deer</name>
    <name type="synonym">Cervus capreolus</name>
    <dbReference type="NCBI Taxonomy" id="9858"/>
    <lineage>
        <taxon>Eukaryota</taxon>
        <taxon>Metazoa</taxon>
        <taxon>Chordata</taxon>
        <taxon>Craniata</taxon>
        <taxon>Vertebrata</taxon>
        <taxon>Euteleostomi</taxon>
        <taxon>Mammalia</taxon>
        <taxon>Eutheria</taxon>
        <taxon>Laurasiatheria</taxon>
        <taxon>Artiodactyla</taxon>
        <taxon>Ruminantia</taxon>
        <taxon>Pecora</taxon>
        <taxon>Cervidae</taxon>
        <taxon>Odocoileinae</taxon>
        <taxon>Capreolus</taxon>
    </lineage>
</organism>
<proteinExistence type="inferred from homology"/>
<accession>P56443</accession>
<reference key="1">
    <citation type="journal article" date="1999" name="Hereditas">
        <title>The melanocyte-stimulating hormone receptor (MC1-R) gene as a tool in evolutionary studies of artiodactyles.</title>
        <authorList>
            <person name="Klungland H."/>
            <person name="Roed K.H."/>
            <person name="Nesbo C.L."/>
            <person name="Jakobsen K.S."/>
            <person name="Vage D.I."/>
        </authorList>
    </citation>
    <scope>NUCLEOTIDE SEQUENCE [GENOMIC DNA]</scope>
</reference>
<keyword id="KW-1003">Cell membrane</keyword>
<keyword id="KW-0297">G-protein coupled receptor</keyword>
<keyword id="KW-0325">Glycoprotein</keyword>
<keyword id="KW-0449">Lipoprotein</keyword>
<keyword id="KW-0472">Membrane</keyword>
<keyword id="KW-0564">Palmitate</keyword>
<keyword id="KW-0675">Receptor</keyword>
<keyword id="KW-0807">Transducer</keyword>
<keyword id="KW-0812">Transmembrane</keyword>
<keyword id="KW-1133">Transmembrane helix</keyword>
<dbReference type="EMBL" id="Y13960">
    <property type="protein sequence ID" value="CAA74294.1"/>
    <property type="molecule type" value="Genomic_DNA"/>
</dbReference>
<dbReference type="SMR" id="P56443"/>
<dbReference type="GlyCosmos" id="P56443">
    <property type="glycosylation" value="1 site, No reported glycans"/>
</dbReference>
<dbReference type="GO" id="GO:0005886">
    <property type="term" value="C:plasma membrane"/>
    <property type="evidence" value="ECO:0000250"/>
    <property type="project" value="UniProtKB"/>
</dbReference>
<dbReference type="GO" id="GO:0004980">
    <property type="term" value="F:melanocyte-stimulating hormone receptor activity"/>
    <property type="evidence" value="ECO:0007669"/>
    <property type="project" value="InterPro"/>
</dbReference>
<dbReference type="CDD" id="cd15351">
    <property type="entry name" value="7tmA_MC1R"/>
    <property type="match status" value="1"/>
</dbReference>
<dbReference type="FunFam" id="1.20.1070.10:FF:000211">
    <property type="entry name" value="Melanocyte-stimulating hormone receptor"/>
    <property type="match status" value="1"/>
</dbReference>
<dbReference type="Gene3D" id="1.20.1070.10">
    <property type="entry name" value="Rhodopsin 7-helix transmembrane proteins"/>
    <property type="match status" value="1"/>
</dbReference>
<dbReference type="InterPro" id="IPR000276">
    <property type="entry name" value="GPCR_Rhodpsn"/>
</dbReference>
<dbReference type="InterPro" id="IPR017452">
    <property type="entry name" value="GPCR_Rhodpsn_7TM"/>
</dbReference>
<dbReference type="InterPro" id="IPR001671">
    <property type="entry name" value="Melcrt_ACTH_rcpt"/>
</dbReference>
<dbReference type="InterPro" id="IPR000761">
    <property type="entry name" value="MSH_rcpt"/>
</dbReference>
<dbReference type="PANTHER" id="PTHR22750">
    <property type="entry name" value="G-PROTEIN COUPLED RECEPTOR"/>
    <property type="match status" value="1"/>
</dbReference>
<dbReference type="Pfam" id="PF00001">
    <property type="entry name" value="7tm_1"/>
    <property type="match status" value="1"/>
</dbReference>
<dbReference type="PRINTS" id="PR00237">
    <property type="entry name" value="GPCRRHODOPSN"/>
</dbReference>
<dbReference type="PRINTS" id="PR00534">
    <property type="entry name" value="MCRFAMILY"/>
</dbReference>
<dbReference type="PRINTS" id="PR00536">
    <property type="entry name" value="MELNOCYTESHR"/>
</dbReference>
<dbReference type="SMART" id="SM01381">
    <property type="entry name" value="7TM_GPCR_Srsx"/>
    <property type="match status" value="1"/>
</dbReference>
<dbReference type="SUPFAM" id="SSF81321">
    <property type="entry name" value="Family A G protein-coupled receptor-like"/>
    <property type="match status" value="1"/>
</dbReference>
<dbReference type="PROSITE" id="PS00237">
    <property type="entry name" value="G_PROTEIN_RECEP_F1_1"/>
    <property type="match status" value="1"/>
</dbReference>
<dbReference type="PROSITE" id="PS50262">
    <property type="entry name" value="G_PROTEIN_RECEP_F1_2"/>
    <property type="match status" value="1"/>
</dbReference>
<sequence length="317" mass="34939">MPVLGSQRRLLGSLNCTPPATFPLTLAPNRTGPQCLEVSIPDGLFLSLGLVSLVENVLVVAAIAKNRNLHSPMYYFICCLAVSDLLVSVSNVLETAVMLLLEAGALAARAAVVQQLDNVIDMLICGSMVSSLCFLGAIAVDRYISIFYALRYHSVVTLPRAWRIIAAIWVASILTSLLFITYYNHTVVLLCLVGFFIAMLALMAVLYVHMLARACQHARGIARLQKRQRPIHQGFGLKGAATLTILLGVFFLCWGPFFLHLSLIVLCPQHPTCGCIFKNFNLFLALIICNAIVDPLIYAFRSQELRKTLQEVLQCSW</sequence>